<keyword id="KW-0186">Copper</keyword>
<keyword id="KW-1015">Disulfide bond</keyword>
<keyword id="KW-0325">Glycoprotein</keyword>
<keyword id="KW-0470">Melanin biosynthesis</keyword>
<keyword id="KW-0472">Membrane</keyword>
<keyword id="KW-0479">Metal-binding</keyword>
<keyword id="KW-0503">Monooxygenase</keyword>
<keyword id="KW-0560">Oxidoreductase</keyword>
<keyword id="KW-1185">Reference proteome</keyword>
<keyword id="KW-0732">Signal</keyword>
<keyword id="KW-0812">Transmembrane</keyword>
<keyword id="KW-1133">Transmembrane helix</keyword>
<keyword id="KW-0862">Zinc</keyword>
<proteinExistence type="evidence at transcript level"/>
<comment type="function">
    <text evidence="2">Plays a role in melanin biosynthesis. Catalyzes the oxidation of 5,6-dihydroxyindole-2-carboxylic acid (DHICA) into indole-5,6-quinone-2-carboxylic acid. May regulate or influence the type of melanin synthesized. Also to a lower extent, capable of hydroxylating tyrosine and producing melanin.</text>
</comment>
<comment type="catalytic activity">
    <reaction evidence="3">
        <text>2 5,6-dihydroxyindole-2-carboxylate + O2 = 2 indole-5,6-quinone-2-carboxylate + 2 H2O</text>
        <dbReference type="Rhea" id="RHEA:68388"/>
        <dbReference type="ChEBI" id="CHEBI:15377"/>
        <dbReference type="ChEBI" id="CHEBI:15379"/>
        <dbReference type="ChEBI" id="CHEBI:16875"/>
        <dbReference type="ChEBI" id="CHEBI:177869"/>
    </reaction>
    <physiologicalReaction direction="left-to-right" evidence="3">
        <dbReference type="Rhea" id="RHEA:68389"/>
    </physiologicalReaction>
</comment>
<comment type="cofactor">
    <cofactor evidence="3">
        <name>Cu(2+)</name>
        <dbReference type="ChEBI" id="CHEBI:29036"/>
    </cofactor>
    <cofactor evidence="3">
        <name>Zn(2+)</name>
        <dbReference type="ChEBI" id="CHEBI:29105"/>
    </cofactor>
    <text evidence="3">Contains bound zinc ions after heterologous expression in insect cells.</text>
</comment>
<comment type="pathway">
    <text evidence="3">Pigment biosynthesis; melanin biosynthesis.</text>
</comment>
<comment type="subunit">
    <text evidence="1">Tyrosinase, TYRP1 and TYRP2 may form a multienzyme complex.</text>
</comment>
<comment type="subcellular location">
    <subcellularLocation>
        <location evidence="2">Melanosome membrane</location>
        <topology evidence="2">Single-pass type I membrane protein</topology>
    </subcellularLocation>
    <text evidence="2">Located to mature stage III and IV melanosomes and apposed endosomal tubular membranes. Transported to pigmented melanosomes by the BLOC-1 complex. Proper trafficking to melanosome is regulated by SGSM2, ANKRD27, RAB9A, RAB32 and RAB38.</text>
</comment>
<comment type="similarity">
    <text evidence="6">Belongs to the tyrosinase family.</text>
</comment>
<comment type="caution">
    <text evidence="2 3 6">The precise function of this protein in melanin biosynthesis is still under debate. DHICA oxidase activity is controversial. The mouse protein has been shown to have DHICA oxidase activity (By similarity). In contrast, the human protein was shown lack DHICA oxidase activity, or to have DHICA oxidase activity only in the presence of Cu(2+), but not with Zn(2+) (By similarity).</text>
</comment>
<gene>
    <name type="primary">TYRP1</name>
</gene>
<accession>O57405</accession>
<name>TYRP1_CHICK</name>
<evidence type="ECO:0000250" key="1"/>
<evidence type="ECO:0000250" key="2">
    <source>
        <dbReference type="UniProtKB" id="P07147"/>
    </source>
</evidence>
<evidence type="ECO:0000250" key="3">
    <source>
        <dbReference type="UniProtKB" id="P17643"/>
    </source>
</evidence>
<evidence type="ECO:0000255" key="4"/>
<evidence type="ECO:0000303" key="5">
    <source>
    </source>
</evidence>
<evidence type="ECO:0000305" key="6"/>
<reference key="1">
    <citation type="journal article" date="1998" name="Biochim. Biophys. Acta">
        <title>The cloning and sequencing of a cDNA coding for chick tyrosinase-related protein-1.</title>
        <authorList>
            <person name="April C.S."/>
            <person name="Jackson I.J."/>
            <person name="Kidson S.H."/>
        </authorList>
    </citation>
    <scope>NUCLEOTIDE SEQUENCE [MRNA]</scope>
    <source>
        <strain>Black Australorp X New Hampshire red</strain>
        <tissue>Neural crest</tissue>
    </source>
</reference>
<protein>
    <recommendedName>
        <fullName>5,6-dihydroxyindole-2-carboxylic acid oxidase</fullName>
        <shortName>DHICA oxidase</shortName>
        <ecNumber>1.14.18.-</ecNumber>
    </recommendedName>
    <alternativeName>
        <fullName evidence="5">Tyrosinase-related protein 1</fullName>
        <shortName evidence="5">TRP-1</shortName>
        <shortName>TRP1</shortName>
    </alternativeName>
</protein>
<organism>
    <name type="scientific">Gallus gallus</name>
    <name type="common">Chicken</name>
    <dbReference type="NCBI Taxonomy" id="9031"/>
    <lineage>
        <taxon>Eukaryota</taxon>
        <taxon>Metazoa</taxon>
        <taxon>Chordata</taxon>
        <taxon>Craniata</taxon>
        <taxon>Vertebrata</taxon>
        <taxon>Euteleostomi</taxon>
        <taxon>Archelosauria</taxon>
        <taxon>Archosauria</taxon>
        <taxon>Dinosauria</taxon>
        <taxon>Saurischia</taxon>
        <taxon>Theropoda</taxon>
        <taxon>Coelurosauria</taxon>
        <taxon>Aves</taxon>
        <taxon>Neognathae</taxon>
        <taxon>Galloanserae</taxon>
        <taxon>Galliformes</taxon>
        <taxon>Phasianidae</taxon>
        <taxon>Phasianinae</taxon>
        <taxon>Gallus</taxon>
    </lineage>
</organism>
<sequence>MQLPMLLLVSLPLLLNMFKPAEAQFPRQCATIESLRSGMCCPDYFPVFGPGSDQCGVSTGRGRCVQVTVDSRPHGPQYIHDGRDDREQWPIRFFNQTCRCNGNFSGYNCGSCRPGWTGPTCSQQINIVRRNLLDLSTEERRRFVNALHQAKVTIHPDIVIATRRREEIFGPDGNTPQFENISIYNYFVWSHYYSVRKTFLGAGQQSFERVDFSHEGPAFVTWHRYHLLQLERDMQNMLQDSTFGLPYWNFATGQNTCDICSDDLMGARSNFDVSLISQNSIFSTWRVLCESIEDYDSLGTICNSTEGGPIRRNPAGNVARPMVQRLPEPEDVPQCLEVGIFDTPPFYSNSTDSFRNTVEGYSDPSGKYDPAVRSLHNLAHLFLNGTGGQTHLSPNDPIFVLLHTFTDAVFDEWLRRYSADISTYPLENAPIGHNREYNMVPFWPPVTNNEMFVTAPENLGYSYDIEWPGPLRVTEMITIAIVTALVLVAIIFAAAACIVRAKKNRDELHQPLLTDQYQHYSDDYDGIATPSQSVV</sequence>
<dbReference type="EC" id="1.14.18.-"/>
<dbReference type="EMBL" id="AF003631">
    <property type="protein sequence ID" value="AAC00213.1"/>
    <property type="molecule type" value="mRNA"/>
</dbReference>
<dbReference type="SMR" id="O57405"/>
<dbReference type="FunCoup" id="O57405">
    <property type="interactions" value="5"/>
</dbReference>
<dbReference type="STRING" id="9031.ENSGALP00000037537"/>
<dbReference type="GlyCosmos" id="O57405">
    <property type="glycosylation" value="6 sites, No reported glycans"/>
</dbReference>
<dbReference type="GlyGen" id="O57405">
    <property type="glycosylation" value="7 sites"/>
</dbReference>
<dbReference type="PaxDb" id="9031-ENSGALP00000037537"/>
<dbReference type="VEuPathDB" id="HostDB:geneid_395913"/>
<dbReference type="eggNOG" id="ENOG502QRNA">
    <property type="taxonomic scope" value="Eukaryota"/>
</dbReference>
<dbReference type="InParanoid" id="O57405"/>
<dbReference type="OrthoDB" id="6132182at2759"/>
<dbReference type="PhylomeDB" id="O57405"/>
<dbReference type="UniPathway" id="UPA00785"/>
<dbReference type="Proteomes" id="UP000000539">
    <property type="component" value="Unassembled WGS sequence"/>
</dbReference>
<dbReference type="GO" id="GO:0042470">
    <property type="term" value="C:melanosome"/>
    <property type="evidence" value="ECO:0000250"/>
    <property type="project" value="UniProtKB"/>
</dbReference>
<dbReference type="GO" id="GO:0033162">
    <property type="term" value="C:melanosome membrane"/>
    <property type="evidence" value="ECO:0000250"/>
    <property type="project" value="UniProtKB"/>
</dbReference>
<dbReference type="GO" id="GO:0046872">
    <property type="term" value="F:metal ion binding"/>
    <property type="evidence" value="ECO:0007669"/>
    <property type="project" value="UniProtKB-KW"/>
</dbReference>
<dbReference type="GO" id="GO:0004497">
    <property type="term" value="F:monooxygenase activity"/>
    <property type="evidence" value="ECO:0007669"/>
    <property type="project" value="UniProtKB-KW"/>
</dbReference>
<dbReference type="GO" id="GO:0042438">
    <property type="term" value="P:melanin biosynthetic process"/>
    <property type="evidence" value="ECO:0007669"/>
    <property type="project" value="UniProtKB-UniPathway"/>
</dbReference>
<dbReference type="GO" id="GO:0030318">
    <property type="term" value="P:melanocyte differentiation"/>
    <property type="evidence" value="ECO:0000318"/>
    <property type="project" value="GO_Central"/>
</dbReference>
<dbReference type="GO" id="GO:0032438">
    <property type="term" value="P:melanosome organization"/>
    <property type="evidence" value="ECO:0000318"/>
    <property type="project" value="GO_Central"/>
</dbReference>
<dbReference type="FunFam" id="1.10.1280.10:FF:000001">
    <property type="entry name" value="5,6-dihydroxyindole-2-carboxylic acid oxidase"/>
    <property type="match status" value="1"/>
</dbReference>
<dbReference type="Gene3D" id="1.10.1280.10">
    <property type="entry name" value="Di-copper center containing domain from catechol oxidase"/>
    <property type="match status" value="1"/>
</dbReference>
<dbReference type="InterPro" id="IPR008922">
    <property type="entry name" value="Di-copper_centre_dom_sf"/>
</dbReference>
<dbReference type="InterPro" id="IPR050316">
    <property type="entry name" value="Tyrosinase/Hemocyanin"/>
</dbReference>
<dbReference type="InterPro" id="IPR002227">
    <property type="entry name" value="Tyrosinase_Cu-bd"/>
</dbReference>
<dbReference type="PANTHER" id="PTHR11474:SF3">
    <property type="entry name" value="5,6-DIHYDROXYINDOLE-2-CARBOXYLIC ACID OXIDASE"/>
    <property type="match status" value="1"/>
</dbReference>
<dbReference type="PANTHER" id="PTHR11474">
    <property type="entry name" value="TYROSINASE FAMILY MEMBER"/>
    <property type="match status" value="1"/>
</dbReference>
<dbReference type="Pfam" id="PF00264">
    <property type="entry name" value="Tyrosinase"/>
    <property type="match status" value="1"/>
</dbReference>
<dbReference type="PRINTS" id="PR00092">
    <property type="entry name" value="TYROSINASE"/>
</dbReference>
<dbReference type="SUPFAM" id="SSF48056">
    <property type="entry name" value="Di-copper centre-containing domain"/>
    <property type="match status" value="1"/>
</dbReference>
<dbReference type="PROSITE" id="PS00497">
    <property type="entry name" value="TYROSINASE_1"/>
    <property type="match status" value="1"/>
</dbReference>
<dbReference type="PROSITE" id="PS00498">
    <property type="entry name" value="TYROSINASE_2"/>
    <property type="match status" value="1"/>
</dbReference>
<feature type="signal peptide" evidence="4">
    <location>
        <begin position="1"/>
        <end position="23"/>
    </location>
</feature>
<feature type="chain" id="PRO_0000035891" description="5,6-dihydroxyindole-2-carboxylic acid oxidase">
    <location>
        <begin position="24"/>
        <end position="535"/>
    </location>
</feature>
<feature type="topological domain" description="Lumenal, melanosome" evidence="4">
    <location>
        <begin position="24"/>
        <end position="478"/>
    </location>
</feature>
<feature type="transmembrane region" description="Helical" evidence="4">
    <location>
        <begin position="479"/>
        <end position="499"/>
    </location>
</feature>
<feature type="topological domain" description="Cytoplasmic" evidence="4">
    <location>
        <begin position="500"/>
        <end position="535"/>
    </location>
</feature>
<feature type="binding site" evidence="3">
    <location>
        <position position="191"/>
    </location>
    <ligand>
        <name>Zn(2+)</name>
        <dbReference type="ChEBI" id="CHEBI:29105"/>
        <label>A</label>
    </ligand>
</feature>
<feature type="binding site" evidence="3">
    <location>
        <position position="214"/>
    </location>
    <ligand>
        <name>Zn(2+)</name>
        <dbReference type="ChEBI" id="CHEBI:29105"/>
        <label>A</label>
    </ligand>
</feature>
<feature type="binding site" evidence="3">
    <location>
        <position position="223"/>
    </location>
    <ligand>
        <name>Zn(2+)</name>
        <dbReference type="ChEBI" id="CHEBI:29105"/>
        <label>A</label>
    </ligand>
</feature>
<feature type="binding site" evidence="3">
    <location>
        <position position="376"/>
    </location>
    <ligand>
        <name>Zn(2+)</name>
        <dbReference type="ChEBI" id="CHEBI:29105"/>
        <label>B</label>
    </ligand>
</feature>
<feature type="binding site" evidence="3">
    <location>
        <position position="380"/>
    </location>
    <ligand>
        <name>Zn(2+)</name>
        <dbReference type="ChEBI" id="CHEBI:29105"/>
        <label>B</label>
    </ligand>
</feature>
<feature type="binding site" evidence="3">
    <location>
        <position position="403"/>
    </location>
    <ligand>
        <name>Zn(2+)</name>
        <dbReference type="ChEBI" id="CHEBI:29105"/>
        <label>B</label>
    </ligand>
</feature>
<feature type="glycosylation site" description="N-linked (GlcNAc...) asparagine" evidence="4">
    <location>
        <position position="95"/>
    </location>
</feature>
<feature type="glycosylation site" description="N-linked (GlcNAc...) asparagine" evidence="4">
    <location>
        <position position="103"/>
    </location>
</feature>
<feature type="glycosylation site" description="N-linked (GlcNAc...) asparagine" evidence="4">
    <location>
        <position position="180"/>
    </location>
</feature>
<feature type="glycosylation site" description="N-linked (GlcNAc...) asparagine" evidence="4">
    <location>
        <position position="303"/>
    </location>
</feature>
<feature type="glycosylation site" description="N-linked (GlcNAc...) asparagine" evidence="4">
    <location>
        <position position="349"/>
    </location>
</feature>
<feature type="glycosylation site" description="N-linked (GlcNAc...) asparagine" evidence="4">
    <location>
        <position position="384"/>
    </location>
</feature>
<feature type="disulfide bond" evidence="3">
    <location>
        <begin position="29"/>
        <end position="40"/>
    </location>
</feature>
<feature type="disulfide bond" evidence="3">
    <location>
        <begin position="41"/>
        <end position="64"/>
    </location>
</feature>
<feature type="disulfide bond" evidence="3">
    <location>
        <begin position="55"/>
        <end position="98"/>
    </location>
</feature>
<feature type="disulfide bond" evidence="3">
    <location>
        <begin position="100"/>
        <end position="109"/>
    </location>
</feature>
<feature type="disulfide bond" evidence="3">
    <location>
        <begin position="112"/>
        <end position="121"/>
    </location>
</feature>
<feature type="disulfide bond" evidence="3">
    <location>
        <begin position="257"/>
        <end position="260"/>
    </location>
</feature>
<feature type="disulfide bond" evidence="3">
    <location>
        <begin position="289"/>
        <end position="302"/>
    </location>
</feature>